<name>Y2253_MYCBO</name>
<reference key="1">
    <citation type="journal article" date="2003" name="Proc. Natl. Acad. Sci. U.S.A.">
        <title>The complete genome sequence of Mycobacterium bovis.</title>
        <authorList>
            <person name="Garnier T."/>
            <person name="Eiglmeier K."/>
            <person name="Camus J.-C."/>
            <person name="Medina N."/>
            <person name="Mansoor H."/>
            <person name="Pryor M."/>
            <person name="Duthoy S."/>
            <person name="Grondin S."/>
            <person name="Lacroix C."/>
            <person name="Monsempe C."/>
            <person name="Simon S."/>
            <person name="Harris B."/>
            <person name="Atkin R."/>
            <person name="Doggett J."/>
            <person name="Mayes R."/>
            <person name="Keating L."/>
            <person name="Wheeler P.R."/>
            <person name="Parkhill J."/>
            <person name="Barrell B.G."/>
            <person name="Cole S.T."/>
            <person name="Gordon S.V."/>
            <person name="Hewinson R.G."/>
        </authorList>
    </citation>
    <scope>NUCLEOTIDE SEQUENCE [LARGE SCALE GENOMIC DNA]</scope>
    <source>
        <strain>ATCC BAA-935 / AF2122/97</strain>
    </source>
</reference>
<reference key="2">
    <citation type="journal article" date="2017" name="Genome Announc.">
        <title>Updated reference genome sequence and annotation of Mycobacterium bovis AF2122/97.</title>
        <authorList>
            <person name="Malone K.M."/>
            <person name="Farrell D."/>
            <person name="Stuber T.P."/>
            <person name="Schubert O.T."/>
            <person name="Aebersold R."/>
            <person name="Robbe-Austerman S."/>
            <person name="Gordon S.V."/>
        </authorList>
    </citation>
    <scope>NUCLEOTIDE SEQUENCE [LARGE SCALE GENOMIC DNA]</scope>
    <scope>GENOME REANNOTATION</scope>
    <source>
        <strain>ATCC BAA-935 / AF2122/97</strain>
    </source>
</reference>
<accession>P64956</accession>
<accession>A0A1R3Y0L4</accession>
<accession>Q10512</accession>
<accession>X2BJN1</accession>
<organism>
    <name type="scientific">Mycobacterium bovis (strain ATCC BAA-935 / AF2122/97)</name>
    <dbReference type="NCBI Taxonomy" id="233413"/>
    <lineage>
        <taxon>Bacteria</taxon>
        <taxon>Bacillati</taxon>
        <taxon>Actinomycetota</taxon>
        <taxon>Actinomycetes</taxon>
        <taxon>Mycobacteriales</taxon>
        <taxon>Mycobacteriaceae</taxon>
        <taxon>Mycobacterium</taxon>
        <taxon>Mycobacterium tuberculosis complex</taxon>
    </lineage>
</organism>
<keyword id="KW-1185">Reference proteome</keyword>
<proteinExistence type="predicted"/>
<protein>
    <recommendedName>
        <fullName>Uncharacterized protein Mb2253c</fullName>
    </recommendedName>
</protein>
<sequence length="364" mass="39145">MKVVIEADGGSRGNPGPAGYGAVVWTADHSTVLAESKQAIGRATNNVAEYRGLIAGLDDAVKLGATEAAVLMDSKLVVEQMSGRWKVKHPDLLKLYVQAQALASQFRRINYEWVPRARNTYADRLANDAMDAAAQSAAADADPAKIVATESPTSPGWTGARGTPTRLLLLRHGQTELSEQRRYSGRGNPGLNEVGWRQVGAAAGYLARRGGIAAVVSSPLQRAYDTAVTAARALALDVVVDDDLVETDFGAWEGLTFAEAAERDPELHRRWLQDTSITPPGGESFDDVLRRVRRGRDRIIVGYEGATVLVVSHVTPIKMLLRLALDAGSGVLYRLHLDLASLSIAEFYADGASSVRLVNQTGYL</sequence>
<dbReference type="EMBL" id="LT708304">
    <property type="protein sequence ID" value="SIU00861.1"/>
    <property type="molecule type" value="Genomic_DNA"/>
</dbReference>
<dbReference type="RefSeq" id="NP_855902.1">
    <property type="nucleotide sequence ID" value="NC_002945.3"/>
</dbReference>
<dbReference type="RefSeq" id="WP_003899226.1">
    <property type="nucleotide sequence ID" value="NC_002945.4"/>
</dbReference>
<dbReference type="SMR" id="P64956"/>
<dbReference type="KEGG" id="mbo:BQ2027_MB2253C"/>
<dbReference type="PATRIC" id="fig|233413.5.peg.2470"/>
<dbReference type="Proteomes" id="UP000001419">
    <property type="component" value="Chromosome"/>
</dbReference>
<dbReference type="GO" id="GO:0005737">
    <property type="term" value="C:cytoplasm"/>
    <property type="evidence" value="ECO:0007669"/>
    <property type="project" value="TreeGrafter"/>
</dbReference>
<dbReference type="GO" id="GO:0003676">
    <property type="term" value="F:nucleic acid binding"/>
    <property type="evidence" value="ECO:0007669"/>
    <property type="project" value="InterPro"/>
</dbReference>
<dbReference type="GO" id="GO:0016791">
    <property type="term" value="F:phosphatase activity"/>
    <property type="evidence" value="ECO:0007669"/>
    <property type="project" value="TreeGrafter"/>
</dbReference>
<dbReference type="GO" id="GO:0004523">
    <property type="term" value="F:RNA-DNA hybrid ribonuclease activity"/>
    <property type="evidence" value="ECO:0007669"/>
    <property type="project" value="InterPro"/>
</dbReference>
<dbReference type="CDD" id="cd07067">
    <property type="entry name" value="HP_PGM_like"/>
    <property type="match status" value="1"/>
</dbReference>
<dbReference type="CDD" id="cd09279">
    <property type="entry name" value="RNase_HI_like"/>
    <property type="match status" value="1"/>
</dbReference>
<dbReference type="FunFam" id="3.40.50.1240:FF:000060">
    <property type="entry name" value="Bifunctional RNase H/acid phosphatase"/>
    <property type="match status" value="1"/>
</dbReference>
<dbReference type="FunFam" id="3.30.420.10:FF:000076">
    <property type="entry name" value="RBR-type E3 ubiquitin transferase"/>
    <property type="match status" value="1"/>
</dbReference>
<dbReference type="Gene3D" id="3.40.50.1240">
    <property type="entry name" value="Phosphoglycerate mutase-like"/>
    <property type="match status" value="1"/>
</dbReference>
<dbReference type="Gene3D" id="3.30.420.10">
    <property type="entry name" value="Ribonuclease H-like superfamily/Ribonuclease H"/>
    <property type="match status" value="1"/>
</dbReference>
<dbReference type="InterPro" id="IPR013078">
    <property type="entry name" value="His_Pase_superF_clade-1"/>
</dbReference>
<dbReference type="InterPro" id="IPR029033">
    <property type="entry name" value="His_PPase_superfam"/>
</dbReference>
<dbReference type="InterPro" id="IPR050275">
    <property type="entry name" value="PGM_Phosphatase"/>
</dbReference>
<dbReference type="InterPro" id="IPR012337">
    <property type="entry name" value="RNaseH-like_sf"/>
</dbReference>
<dbReference type="InterPro" id="IPR014636">
    <property type="entry name" value="RNaseH/PGlycerate_mutase"/>
</dbReference>
<dbReference type="InterPro" id="IPR002156">
    <property type="entry name" value="RNaseH_domain"/>
</dbReference>
<dbReference type="InterPro" id="IPR036397">
    <property type="entry name" value="RNaseH_sf"/>
</dbReference>
<dbReference type="NCBIfam" id="NF005567">
    <property type="entry name" value="PRK07238.1"/>
    <property type="match status" value="1"/>
</dbReference>
<dbReference type="PANTHER" id="PTHR48100">
    <property type="entry name" value="BROAD-SPECIFICITY PHOSPHATASE YOR283W-RELATED"/>
    <property type="match status" value="1"/>
</dbReference>
<dbReference type="PANTHER" id="PTHR48100:SF62">
    <property type="entry name" value="GLUCOSYL-3-PHOSPHOGLYCERATE PHOSPHATASE"/>
    <property type="match status" value="1"/>
</dbReference>
<dbReference type="Pfam" id="PF00300">
    <property type="entry name" value="His_Phos_1"/>
    <property type="match status" value="1"/>
</dbReference>
<dbReference type="Pfam" id="PF13456">
    <property type="entry name" value="RVT_3"/>
    <property type="match status" value="1"/>
</dbReference>
<dbReference type="PIRSF" id="PIRSF036922">
    <property type="entry name" value="RNaseH_PGAM"/>
    <property type="match status" value="1"/>
</dbReference>
<dbReference type="SMART" id="SM00855">
    <property type="entry name" value="PGAM"/>
    <property type="match status" value="1"/>
</dbReference>
<dbReference type="SUPFAM" id="SSF53254">
    <property type="entry name" value="Phosphoglycerate mutase-like"/>
    <property type="match status" value="1"/>
</dbReference>
<dbReference type="SUPFAM" id="SSF53098">
    <property type="entry name" value="Ribonuclease H-like"/>
    <property type="match status" value="1"/>
</dbReference>
<dbReference type="PROSITE" id="PS50879">
    <property type="entry name" value="RNASE_H_1"/>
    <property type="match status" value="1"/>
</dbReference>
<evidence type="ECO:0000255" key="1">
    <source>
        <dbReference type="PROSITE-ProRule" id="PRU00408"/>
    </source>
</evidence>
<gene>
    <name type="ordered locus">BQ2027_MB2253C</name>
</gene>
<feature type="chain" id="PRO_0000103982" description="Uncharacterized protein Mb2253c">
    <location>
        <begin position="1"/>
        <end position="364"/>
    </location>
</feature>
<feature type="domain" description="RNase H type-1" evidence="1">
    <location>
        <begin position="1"/>
        <end position="139"/>
    </location>
</feature>